<protein>
    <recommendedName>
        <fullName evidence="1">S-adenosylmethionine:tRNA ribosyltransferase-isomerase</fullName>
        <ecNumber evidence="1">2.4.99.17</ecNumber>
    </recommendedName>
    <alternativeName>
        <fullName evidence="1">Queuosine biosynthesis protein QueA</fullName>
    </alternativeName>
</protein>
<dbReference type="EC" id="2.4.99.17" evidence="1"/>
<dbReference type="EMBL" id="AE006468">
    <property type="protein sequence ID" value="AAL19358.1"/>
    <property type="molecule type" value="Genomic_DNA"/>
</dbReference>
<dbReference type="RefSeq" id="NP_459399.1">
    <property type="nucleotide sequence ID" value="NC_003197.2"/>
</dbReference>
<dbReference type="RefSeq" id="WP_001266530.1">
    <property type="nucleotide sequence ID" value="NC_003197.2"/>
</dbReference>
<dbReference type="SMR" id="Q8ZRD9"/>
<dbReference type="STRING" id="99287.STM0404"/>
<dbReference type="PaxDb" id="99287-STM0404"/>
<dbReference type="GeneID" id="1251923"/>
<dbReference type="KEGG" id="stm:STM0404"/>
<dbReference type="PATRIC" id="fig|99287.12.peg.431"/>
<dbReference type="HOGENOM" id="CLU_039110_1_0_6"/>
<dbReference type="OMA" id="YSYGDGM"/>
<dbReference type="PhylomeDB" id="Q8ZRD9"/>
<dbReference type="BioCyc" id="SENT99287:STM0404-MONOMER"/>
<dbReference type="UniPathway" id="UPA00392"/>
<dbReference type="Proteomes" id="UP000001014">
    <property type="component" value="Chromosome"/>
</dbReference>
<dbReference type="GO" id="GO:0005737">
    <property type="term" value="C:cytoplasm"/>
    <property type="evidence" value="ECO:0007669"/>
    <property type="project" value="UniProtKB-SubCell"/>
</dbReference>
<dbReference type="GO" id="GO:0051075">
    <property type="term" value="F:S-adenosylmethionine:tRNA ribosyltransferase-isomerase activity"/>
    <property type="evidence" value="ECO:0000318"/>
    <property type="project" value="GO_Central"/>
</dbReference>
<dbReference type="GO" id="GO:0008616">
    <property type="term" value="P:queuosine biosynthetic process"/>
    <property type="evidence" value="ECO:0000318"/>
    <property type="project" value="GO_Central"/>
</dbReference>
<dbReference type="GO" id="GO:0002099">
    <property type="term" value="P:tRNA wobble guanine modification"/>
    <property type="evidence" value="ECO:0000318"/>
    <property type="project" value="GO_Central"/>
</dbReference>
<dbReference type="FunFam" id="2.40.10.240:FF:000001">
    <property type="entry name" value="S-adenosylmethionine:tRNA ribosyltransferase-isomerase"/>
    <property type="match status" value="1"/>
</dbReference>
<dbReference type="FunFam" id="3.40.1780.10:FF:000001">
    <property type="entry name" value="S-adenosylmethionine:tRNA ribosyltransferase-isomerase"/>
    <property type="match status" value="1"/>
</dbReference>
<dbReference type="Gene3D" id="2.40.10.240">
    <property type="entry name" value="QueA-like"/>
    <property type="match status" value="1"/>
</dbReference>
<dbReference type="Gene3D" id="3.40.1780.10">
    <property type="entry name" value="QueA-like"/>
    <property type="match status" value="1"/>
</dbReference>
<dbReference type="HAMAP" id="MF_00113">
    <property type="entry name" value="QueA"/>
    <property type="match status" value="1"/>
</dbReference>
<dbReference type="InterPro" id="IPR003699">
    <property type="entry name" value="QueA"/>
</dbReference>
<dbReference type="InterPro" id="IPR042118">
    <property type="entry name" value="QueA_dom1"/>
</dbReference>
<dbReference type="InterPro" id="IPR042119">
    <property type="entry name" value="QueA_dom2"/>
</dbReference>
<dbReference type="InterPro" id="IPR036100">
    <property type="entry name" value="QueA_sf"/>
</dbReference>
<dbReference type="NCBIfam" id="NF001140">
    <property type="entry name" value="PRK00147.1"/>
    <property type="match status" value="1"/>
</dbReference>
<dbReference type="NCBIfam" id="TIGR00113">
    <property type="entry name" value="queA"/>
    <property type="match status" value="1"/>
</dbReference>
<dbReference type="PANTHER" id="PTHR30307">
    <property type="entry name" value="S-ADENOSYLMETHIONINE:TRNA RIBOSYLTRANSFERASE-ISOMERASE"/>
    <property type="match status" value="1"/>
</dbReference>
<dbReference type="PANTHER" id="PTHR30307:SF0">
    <property type="entry name" value="S-ADENOSYLMETHIONINE:TRNA RIBOSYLTRANSFERASE-ISOMERASE"/>
    <property type="match status" value="1"/>
</dbReference>
<dbReference type="Pfam" id="PF02547">
    <property type="entry name" value="Queuosine_synth"/>
    <property type="match status" value="1"/>
</dbReference>
<dbReference type="SUPFAM" id="SSF111337">
    <property type="entry name" value="QueA-like"/>
    <property type="match status" value="1"/>
</dbReference>
<evidence type="ECO:0000255" key="1">
    <source>
        <dbReference type="HAMAP-Rule" id="MF_00113"/>
    </source>
</evidence>
<keyword id="KW-0963">Cytoplasm</keyword>
<keyword id="KW-0671">Queuosine biosynthesis</keyword>
<keyword id="KW-1185">Reference proteome</keyword>
<keyword id="KW-0949">S-adenosyl-L-methionine</keyword>
<keyword id="KW-0808">Transferase</keyword>
<reference key="1">
    <citation type="journal article" date="2001" name="Nature">
        <title>Complete genome sequence of Salmonella enterica serovar Typhimurium LT2.</title>
        <authorList>
            <person name="McClelland M."/>
            <person name="Sanderson K.E."/>
            <person name="Spieth J."/>
            <person name="Clifton S.W."/>
            <person name="Latreille P."/>
            <person name="Courtney L."/>
            <person name="Porwollik S."/>
            <person name="Ali J."/>
            <person name="Dante M."/>
            <person name="Du F."/>
            <person name="Hou S."/>
            <person name="Layman D."/>
            <person name="Leonard S."/>
            <person name="Nguyen C."/>
            <person name="Scott K."/>
            <person name="Holmes A."/>
            <person name="Grewal N."/>
            <person name="Mulvaney E."/>
            <person name="Ryan E."/>
            <person name="Sun H."/>
            <person name="Florea L."/>
            <person name="Miller W."/>
            <person name="Stoneking T."/>
            <person name="Nhan M."/>
            <person name="Waterston R."/>
            <person name="Wilson R.K."/>
        </authorList>
    </citation>
    <scope>NUCLEOTIDE SEQUENCE [LARGE SCALE GENOMIC DNA]</scope>
    <source>
        <strain>LT2 / SGSC1412 / ATCC 700720</strain>
    </source>
</reference>
<feature type="chain" id="PRO_0000165435" description="S-adenosylmethionine:tRNA ribosyltransferase-isomerase">
    <location>
        <begin position="1"/>
        <end position="354"/>
    </location>
</feature>
<organism>
    <name type="scientific">Salmonella typhimurium (strain LT2 / SGSC1412 / ATCC 700720)</name>
    <dbReference type="NCBI Taxonomy" id="99287"/>
    <lineage>
        <taxon>Bacteria</taxon>
        <taxon>Pseudomonadati</taxon>
        <taxon>Pseudomonadota</taxon>
        <taxon>Gammaproteobacteria</taxon>
        <taxon>Enterobacterales</taxon>
        <taxon>Enterobacteriaceae</taxon>
        <taxon>Salmonella</taxon>
    </lineage>
</organism>
<gene>
    <name evidence="1" type="primary">queA</name>
    <name type="ordered locus">STM0404</name>
</gene>
<proteinExistence type="inferred from homology"/>
<comment type="function">
    <text evidence="1">Transfers and isomerizes the ribose moiety from AdoMet to the 7-aminomethyl group of 7-deazaguanine (preQ1-tRNA) to give epoxyqueuosine (oQ-tRNA).</text>
</comment>
<comment type="catalytic activity">
    <reaction evidence="1">
        <text>7-aminomethyl-7-carbaguanosine(34) in tRNA + S-adenosyl-L-methionine = epoxyqueuosine(34) in tRNA + adenine + L-methionine + 2 H(+)</text>
        <dbReference type="Rhea" id="RHEA:32155"/>
        <dbReference type="Rhea" id="RHEA-COMP:10342"/>
        <dbReference type="Rhea" id="RHEA-COMP:18582"/>
        <dbReference type="ChEBI" id="CHEBI:15378"/>
        <dbReference type="ChEBI" id="CHEBI:16708"/>
        <dbReference type="ChEBI" id="CHEBI:57844"/>
        <dbReference type="ChEBI" id="CHEBI:59789"/>
        <dbReference type="ChEBI" id="CHEBI:82833"/>
        <dbReference type="ChEBI" id="CHEBI:194443"/>
        <dbReference type="EC" id="2.4.99.17"/>
    </reaction>
</comment>
<comment type="pathway">
    <text evidence="1">tRNA modification; tRNA-queuosine biosynthesis.</text>
</comment>
<comment type="subunit">
    <text evidence="1">Monomer.</text>
</comment>
<comment type="subcellular location">
    <subcellularLocation>
        <location evidence="1">Cytoplasm</location>
    </subcellularLocation>
</comment>
<comment type="similarity">
    <text evidence="1">Belongs to the QueA family.</text>
</comment>
<name>QUEA_SALTY</name>
<sequence>MRVTDFSFELPESLIAHYPQPERSRCRLLSLEGPTGALTHGTFTDLLDKLNPGDLLVFNNTRVIPARLFGRKASGGKIEVLVERMLDDKRILAHIRASKAPKPGTELLLGDDESIHATMTARHGALFEVEFNDPRPVLDILNAIGHMPLPPYIDRPDEDADRELYQTVYSEKPGAVAAPTAGLHFDEPLLAALREKGVEMAFVTLHVGAGTFQPVRVDTIEDHIMHSEYAEVPQEVVDAVLAAKARGNRVIAVGTTSVRSLESAAQAAKSDLIEPFFGDTQIFIYPGYQYKVIDALITNFHLPESTLIMLVSAFAGYQHTMNAYKTAVEQKYRFFSYGDAMFITYNPQAISERP</sequence>
<accession>Q8ZRD9</accession>